<keyword id="KW-0520">NAD</keyword>
<keyword id="KW-0521">NADP</keyword>
<keyword id="KW-0560">Oxidoreductase</keyword>
<keyword id="KW-1185">Reference proteome</keyword>
<organism>
    <name type="scientific">Fusobacterium nucleatum subsp. nucleatum (strain ATCC 25586 / DSM 15643 / BCRC 10681 / CIP 101130 / JCM 8532 / KCTC 2640 / LMG 13131 / VPI 4355)</name>
    <dbReference type="NCBI Taxonomy" id="190304"/>
    <lineage>
        <taxon>Bacteria</taxon>
        <taxon>Fusobacteriati</taxon>
        <taxon>Fusobacteriota</taxon>
        <taxon>Fusobacteriia</taxon>
        <taxon>Fusobacteriales</taxon>
        <taxon>Fusobacteriaceae</taxon>
        <taxon>Fusobacterium</taxon>
    </lineage>
</organism>
<sequence length="345" mass="36892">MKKGCKYGTHRVIEPAGVLPQPAKKISNDMEIFSNEILIDVIALNIDSASFTQIEEEAGHDVEKVKAKIKEIVAERGKMQNPVTGSGGMLIGTVEKIGDDLVGKTDLKVGDKIATLVSLSLTPLRIDEIINIKPEIDRVEIKGKAILFESGIYAVLPKDMPENLALAALDVAGAPAQVAKLVKPCQSVAILGSAGKSGMLCAYEAVKRVGPTGKVIGVVRNDKEKALLQRVSDKVKIVIADATKPMDVLHAVLEANDAKEVDVAINCVNVPNTEMSTILPVKEFGIAYFFSMATGFSKAALGAEGVGKDITMIVGNGYTVDHAAITLEELRESAVLREIFNEIYL</sequence>
<proteinExistence type="evidence at protein level"/>
<accession>Q8RHX3</accession>
<evidence type="ECO:0000269" key="1">
    <source>
    </source>
</evidence>
<evidence type="ECO:0000269" key="2">
    <source>
    </source>
</evidence>
<evidence type="ECO:0000303" key="3">
    <source>
    </source>
</evidence>
<evidence type="ECO:0000305" key="4"/>
<evidence type="ECO:0000305" key="5">
    <source>
    </source>
</evidence>
<reference key="1">
    <citation type="journal article" date="2002" name="J. Bacteriol.">
        <title>Genome sequence and analysis of the oral bacterium Fusobacterium nucleatum strain ATCC 25586.</title>
        <authorList>
            <person name="Kapatral V."/>
            <person name="Anderson I."/>
            <person name="Ivanova N."/>
            <person name="Reznik G."/>
            <person name="Los T."/>
            <person name="Lykidis A."/>
            <person name="Bhattacharyya A."/>
            <person name="Bartman A."/>
            <person name="Gardner W."/>
            <person name="Grechkin G."/>
            <person name="Zhu L."/>
            <person name="Vasieva O."/>
            <person name="Chu L."/>
            <person name="Kogan Y."/>
            <person name="Chaga O."/>
            <person name="Goltsman E."/>
            <person name="Bernal A."/>
            <person name="Larsen N."/>
            <person name="D'Souza M."/>
            <person name="Walunas T."/>
            <person name="Pusch G."/>
            <person name="Haselkorn R."/>
            <person name="Fonstein M."/>
            <person name="Kyrpides N.C."/>
            <person name="Overbeek R."/>
        </authorList>
    </citation>
    <scope>NUCLEOTIDE SEQUENCE [LARGE SCALE GENOMIC DNA]</scope>
    <source>
        <strain>ATCC 25586 / DSM 15643 / BCRC 10681 / CIP 101130 / JCM 8532 / KCTC 2640 / LMG 13131 / VPI 4355</strain>
    </source>
</reference>
<reference key="2">
    <citation type="journal article" date="1982" name="J. Bacteriol.">
        <title>Pathway of lysine degradation in Fusobacterium nucleatum.</title>
        <authorList>
            <person name="Barker H.A."/>
            <person name="Kahn J.M."/>
            <person name="Hedrick L."/>
        </authorList>
    </citation>
    <scope>FUNCTION</scope>
    <scope>CATALYTIC ACTIVITY</scope>
    <scope>PATHWAY</scope>
    <scope>SUBUNIT</scope>
    <source>
        <strain evidence="2">ATCC 25586 / DSM 15643 / BCRC 10681 / CIP 101130 / JCM 8532 / KCTC 2640 / LMG 13131 / VPI 4355</strain>
    </source>
</reference>
<reference key="3">
    <citation type="journal article" date="2007" name="J. Biol. Chem.">
        <title>Identification of the last unknown genes in the fermentation pathway of lysine.</title>
        <authorList>
            <person name="Kreimeyer A."/>
            <person name="Perret A."/>
            <person name="Lechaplais C."/>
            <person name="Vallenet D."/>
            <person name="Medigue C."/>
            <person name="Salanoubat M."/>
            <person name="Weissenbach J."/>
        </authorList>
    </citation>
    <scope>FUNCTION</scope>
    <scope>CATALYTIC ACTIVITY</scope>
    <scope>BIOPHYSICOCHEMICAL PROPERTIES</scope>
    <scope>SUBSTRATE SPECIFICITY</scope>
    <scope>PATHWAY</scope>
    <scope>SUBUNIT</scope>
    <source>
        <strain evidence="1">ATCC 25586 / DSM 15643 / BCRC 10681 / CIP 101130 / JCM 8532 / KCTC 2640 / LMG 13131 / VPI 4355</strain>
    </source>
</reference>
<protein>
    <recommendedName>
        <fullName evidence="3">L-erythro-3,5-diaminohexanoate dehydrogenase</fullName>
        <ecNumber evidence="1 2">1.4.1.11</ecNumber>
    </recommendedName>
    <alternativeName>
        <fullName evidence="3">3,5-diaminohexanoate dehydrogenase</fullName>
    </alternativeName>
</protein>
<comment type="function">
    <text evidence="1 2">Involved in the anaerobic fermentation of lysine. Catalyzes the oxidative deamination of L-erythro-3,5-diaminohexanoate (3,5-DAH) to 3-keto-5-aminohexanoate (KAH). It can use NAD or NADP.</text>
</comment>
<comment type="catalytic activity">
    <reaction evidence="1 2">
        <text>(3S,5S)-3,5-diaminohexanoate + NAD(+) + H2O = (5S)-5-amino-3-oxohexanoate + NH4(+) + NADH + H(+)</text>
        <dbReference type="Rhea" id="RHEA:19633"/>
        <dbReference type="ChEBI" id="CHEBI:15377"/>
        <dbReference type="ChEBI" id="CHEBI:15378"/>
        <dbReference type="ChEBI" id="CHEBI:28938"/>
        <dbReference type="ChEBI" id="CHEBI:57436"/>
        <dbReference type="ChEBI" id="CHEBI:57540"/>
        <dbReference type="ChEBI" id="CHEBI:57945"/>
        <dbReference type="ChEBI" id="CHEBI:58523"/>
        <dbReference type="EC" id="1.4.1.11"/>
    </reaction>
</comment>
<comment type="biophysicochemical properties">
    <kinetics>
        <KM evidence="1">3.2 uM for 3,5-DAH (with NAD as cofactor)</KM>
        <KM evidence="1">197.8 uM for 3,5-DAH (with NADP as cofactor)</KM>
        <Vmax evidence="1">4.1 nmol/min/ug enzyme with 3,5-DAH as substrate (with NAD as cofactor)</Vmax>
        <Vmax evidence="1">4.5 nmol/min/ug enzyme with 3,5-DAH as substrate (with NADP as cofactor)</Vmax>
    </kinetics>
</comment>
<comment type="pathway">
    <text evidence="2 5">Amino-acid degradation; L-lysine degradation via acetate pathway.</text>
</comment>
<comment type="subunit">
    <text evidence="1 2">Homodimer.</text>
</comment>
<comment type="similarity">
    <text evidence="4">Belongs to the KDD family.</text>
</comment>
<feature type="chain" id="PRO_0000416981" description="L-erythro-3,5-diaminohexanoate dehydrogenase">
    <location>
        <begin position="1"/>
        <end position="345"/>
    </location>
</feature>
<dbReference type="EC" id="1.4.1.11" evidence="1 2"/>
<dbReference type="EMBL" id="AE009951">
    <property type="protein sequence ID" value="AAL93966.1"/>
    <property type="molecule type" value="Genomic_DNA"/>
</dbReference>
<dbReference type="RefSeq" id="NP_602667.1">
    <property type="nucleotide sequence ID" value="NC_003454.1"/>
</dbReference>
<dbReference type="RefSeq" id="WP_011015884.1">
    <property type="nucleotide sequence ID" value="NZ_CP028101.1"/>
</dbReference>
<dbReference type="SMR" id="Q8RHX3"/>
<dbReference type="STRING" id="190304.FN1867"/>
<dbReference type="PaxDb" id="190304-FN1867"/>
<dbReference type="EnsemblBacteria" id="AAL93966">
    <property type="protein sequence ID" value="AAL93966"/>
    <property type="gene ID" value="FN1867"/>
</dbReference>
<dbReference type="GeneID" id="79783111"/>
<dbReference type="KEGG" id="fnu:FN1867"/>
<dbReference type="PATRIC" id="fig|190304.8.peg.343"/>
<dbReference type="eggNOG" id="COG0604">
    <property type="taxonomic scope" value="Bacteria"/>
</dbReference>
<dbReference type="HOGENOM" id="CLU_826176_0_0_0"/>
<dbReference type="InParanoid" id="Q8RHX3"/>
<dbReference type="BioCyc" id="FNUC190304:G1FZS-364-MONOMER"/>
<dbReference type="BioCyc" id="MetaCyc:MONOMER-12294"/>
<dbReference type="SABIO-RK" id="Q8RHX3"/>
<dbReference type="UniPathway" id="UPA00870"/>
<dbReference type="Proteomes" id="UP000002521">
    <property type="component" value="Chromosome"/>
</dbReference>
<dbReference type="GO" id="GO:0047124">
    <property type="term" value="F:L-erythro-3,5-diaminohexanoate dehydrogenase activity"/>
    <property type="evidence" value="ECO:0007669"/>
    <property type="project" value="UniProtKB-EC"/>
</dbReference>
<dbReference type="GO" id="GO:0019475">
    <property type="term" value="P:L-lysine catabolic process to acetate"/>
    <property type="evidence" value="ECO:0007669"/>
    <property type="project" value="UniProtKB-UniPathway"/>
</dbReference>
<dbReference type="Gene3D" id="3.90.180.10">
    <property type="entry name" value="Medium-chain alcohol dehydrogenases, catalytic domain"/>
    <property type="match status" value="1"/>
</dbReference>
<dbReference type="Gene3D" id="3.40.50.720">
    <property type="entry name" value="NAD(P)-binding Rossmann-like Domain"/>
    <property type="match status" value="1"/>
</dbReference>
<dbReference type="InterPro" id="IPR036291">
    <property type="entry name" value="NAD(P)-bd_dom_sf"/>
</dbReference>
<dbReference type="SUPFAM" id="SSF51735">
    <property type="entry name" value="NAD(P)-binding Rossmann-fold domains"/>
    <property type="match status" value="1"/>
</dbReference>
<gene>
    <name evidence="3" type="primary">kdd</name>
    <name type="ordered locus">FN1867</name>
</gene>
<name>KDD_FUSNN</name>